<accession>C3PB71</accession>
<name>DDL_BACAA</name>
<feature type="chain" id="PRO_1000117447" description="D-alanine--D-alanine ligase">
    <location>
        <begin position="1"/>
        <end position="304"/>
    </location>
</feature>
<feature type="domain" description="ATP-grasp" evidence="2">
    <location>
        <begin position="99"/>
        <end position="293"/>
    </location>
</feature>
<feature type="binding site" evidence="2">
    <location>
        <begin position="126"/>
        <end position="181"/>
    </location>
    <ligand>
        <name>ATP</name>
        <dbReference type="ChEBI" id="CHEBI:30616"/>
    </ligand>
</feature>
<feature type="binding site" evidence="2">
    <location>
        <position position="248"/>
    </location>
    <ligand>
        <name>Mg(2+)</name>
        <dbReference type="ChEBI" id="CHEBI:18420"/>
        <label>1</label>
    </ligand>
</feature>
<feature type="binding site" evidence="2">
    <location>
        <position position="260"/>
    </location>
    <ligand>
        <name>Mg(2+)</name>
        <dbReference type="ChEBI" id="CHEBI:18420"/>
        <label>1</label>
    </ligand>
</feature>
<feature type="binding site" evidence="2">
    <location>
        <position position="260"/>
    </location>
    <ligand>
        <name>Mg(2+)</name>
        <dbReference type="ChEBI" id="CHEBI:18420"/>
        <label>2</label>
    </ligand>
</feature>
<feature type="binding site" evidence="2">
    <location>
        <position position="262"/>
    </location>
    <ligand>
        <name>Mg(2+)</name>
        <dbReference type="ChEBI" id="CHEBI:18420"/>
        <label>2</label>
    </ligand>
</feature>
<sequence>MRIGVIMGGVSSEKQVSIMTGNEMIANLDKNKYEIVPITLNEKMDLIEKAKDIDFALLALHGKYGEDGTVQGTLESLGIPYSGSNMLSSGICMDKNISKKILRYEGIETPDWIELTKMEDLNFDELDKLGFPLVVKPNSGGSSVGVKIVYDKDELISMLETVFEWDSEVVIEKYIKGEEITCSIFDGKQLPIISIRHAAEFFDYNAKYDDASTIEEVIELPAELKERVNKASLACYKALKCSVYARVDMMVKDGIPYVMEVNTLPGMTQASLLPKSADAAGIHYSKLLDMIIETSLRVRKEEGF</sequence>
<protein>
    <recommendedName>
        <fullName evidence="2">D-alanine--D-alanine ligase</fullName>
        <ecNumber evidence="2">6.3.2.4</ecNumber>
    </recommendedName>
    <alternativeName>
        <fullName evidence="2">D-Ala-D-Ala ligase</fullName>
    </alternativeName>
    <alternativeName>
        <fullName evidence="2">D-alanylalanine synthetase</fullName>
    </alternativeName>
</protein>
<comment type="function">
    <text evidence="2">Cell wall formation.</text>
</comment>
<comment type="catalytic activity">
    <reaction evidence="2">
        <text>2 D-alanine + ATP = D-alanyl-D-alanine + ADP + phosphate + H(+)</text>
        <dbReference type="Rhea" id="RHEA:11224"/>
        <dbReference type="ChEBI" id="CHEBI:15378"/>
        <dbReference type="ChEBI" id="CHEBI:30616"/>
        <dbReference type="ChEBI" id="CHEBI:43474"/>
        <dbReference type="ChEBI" id="CHEBI:57416"/>
        <dbReference type="ChEBI" id="CHEBI:57822"/>
        <dbReference type="ChEBI" id="CHEBI:456216"/>
        <dbReference type="EC" id="6.3.2.4"/>
    </reaction>
</comment>
<comment type="cofactor">
    <cofactor evidence="1">
        <name>Mg(2+)</name>
        <dbReference type="ChEBI" id="CHEBI:18420"/>
    </cofactor>
    <cofactor evidence="1">
        <name>Mn(2+)</name>
        <dbReference type="ChEBI" id="CHEBI:29035"/>
    </cofactor>
    <text evidence="1">Binds 2 magnesium or manganese ions per subunit.</text>
</comment>
<comment type="pathway">
    <text evidence="2">Cell wall biogenesis; peptidoglycan biosynthesis.</text>
</comment>
<comment type="subcellular location">
    <subcellularLocation>
        <location evidence="2">Cytoplasm</location>
    </subcellularLocation>
</comment>
<comment type="similarity">
    <text evidence="2">Belongs to the D-alanine--D-alanine ligase family.</text>
</comment>
<proteinExistence type="inferred from homology"/>
<gene>
    <name evidence="2" type="primary">ddl</name>
    <name type="ordered locus">BAA_2673</name>
</gene>
<evidence type="ECO:0000250" key="1"/>
<evidence type="ECO:0000255" key="2">
    <source>
        <dbReference type="HAMAP-Rule" id="MF_00047"/>
    </source>
</evidence>
<keyword id="KW-0067">ATP-binding</keyword>
<keyword id="KW-0133">Cell shape</keyword>
<keyword id="KW-0961">Cell wall biogenesis/degradation</keyword>
<keyword id="KW-0963">Cytoplasm</keyword>
<keyword id="KW-0436">Ligase</keyword>
<keyword id="KW-0460">Magnesium</keyword>
<keyword id="KW-0464">Manganese</keyword>
<keyword id="KW-0479">Metal-binding</keyword>
<keyword id="KW-0547">Nucleotide-binding</keyword>
<keyword id="KW-0573">Peptidoglycan synthesis</keyword>
<reference key="1">
    <citation type="submission" date="2009-04" db="EMBL/GenBank/DDBJ databases">
        <title>Genome sequence of Bacillus anthracis A0248.</title>
        <authorList>
            <person name="Dodson R.J."/>
            <person name="Munk A.C."/>
            <person name="Bruce D."/>
            <person name="Detter C."/>
            <person name="Tapia R."/>
            <person name="Sutton G."/>
            <person name="Sims D."/>
            <person name="Brettin T."/>
        </authorList>
    </citation>
    <scope>NUCLEOTIDE SEQUENCE [LARGE SCALE GENOMIC DNA]</scope>
    <source>
        <strain>A0248</strain>
    </source>
</reference>
<organism>
    <name type="scientific">Bacillus anthracis (strain A0248)</name>
    <dbReference type="NCBI Taxonomy" id="592021"/>
    <lineage>
        <taxon>Bacteria</taxon>
        <taxon>Bacillati</taxon>
        <taxon>Bacillota</taxon>
        <taxon>Bacilli</taxon>
        <taxon>Bacillales</taxon>
        <taxon>Bacillaceae</taxon>
        <taxon>Bacillus</taxon>
        <taxon>Bacillus cereus group</taxon>
    </lineage>
</organism>
<dbReference type="EC" id="6.3.2.4" evidence="2"/>
<dbReference type="EMBL" id="CP001598">
    <property type="protein sequence ID" value="ACQ50743.1"/>
    <property type="molecule type" value="Genomic_DNA"/>
</dbReference>
<dbReference type="RefSeq" id="WP_003157623.1">
    <property type="nucleotide sequence ID" value="NC_012659.1"/>
</dbReference>
<dbReference type="SMR" id="C3PB71"/>
<dbReference type="GeneID" id="45022466"/>
<dbReference type="KEGG" id="bai:BAA_2673"/>
<dbReference type="HOGENOM" id="CLU_039268_1_1_9"/>
<dbReference type="UniPathway" id="UPA00219"/>
<dbReference type="GO" id="GO:0005737">
    <property type="term" value="C:cytoplasm"/>
    <property type="evidence" value="ECO:0007669"/>
    <property type="project" value="UniProtKB-SubCell"/>
</dbReference>
<dbReference type="GO" id="GO:0005524">
    <property type="term" value="F:ATP binding"/>
    <property type="evidence" value="ECO:0007669"/>
    <property type="project" value="UniProtKB-KW"/>
</dbReference>
<dbReference type="GO" id="GO:0008716">
    <property type="term" value="F:D-alanine-D-alanine ligase activity"/>
    <property type="evidence" value="ECO:0007669"/>
    <property type="project" value="UniProtKB-UniRule"/>
</dbReference>
<dbReference type="GO" id="GO:0046872">
    <property type="term" value="F:metal ion binding"/>
    <property type="evidence" value="ECO:0007669"/>
    <property type="project" value="UniProtKB-KW"/>
</dbReference>
<dbReference type="GO" id="GO:0071555">
    <property type="term" value="P:cell wall organization"/>
    <property type="evidence" value="ECO:0007669"/>
    <property type="project" value="UniProtKB-KW"/>
</dbReference>
<dbReference type="GO" id="GO:0009252">
    <property type="term" value="P:peptidoglycan biosynthetic process"/>
    <property type="evidence" value="ECO:0007669"/>
    <property type="project" value="UniProtKB-UniRule"/>
</dbReference>
<dbReference type="GO" id="GO:0008360">
    <property type="term" value="P:regulation of cell shape"/>
    <property type="evidence" value="ECO:0007669"/>
    <property type="project" value="UniProtKB-KW"/>
</dbReference>
<dbReference type="FunFam" id="3.30.470.20:FF:000074">
    <property type="entry name" value="D-alanine--D-alanine ligase"/>
    <property type="match status" value="1"/>
</dbReference>
<dbReference type="FunFam" id="3.40.50.20:FF:000031">
    <property type="entry name" value="D-alanine--D-alanine ligase"/>
    <property type="match status" value="1"/>
</dbReference>
<dbReference type="Gene3D" id="3.40.50.20">
    <property type="match status" value="1"/>
</dbReference>
<dbReference type="Gene3D" id="3.30.1490.20">
    <property type="entry name" value="ATP-grasp fold, A domain"/>
    <property type="match status" value="1"/>
</dbReference>
<dbReference type="Gene3D" id="3.30.470.20">
    <property type="entry name" value="ATP-grasp fold, B domain"/>
    <property type="match status" value="1"/>
</dbReference>
<dbReference type="HAMAP" id="MF_00047">
    <property type="entry name" value="Dala_Dala_lig"/>
    <property type="match status" value="1"/>
</dbReference>
<dbReference type="InterPro" id="IPR011761">
    <property type="entry name" value="ATP-grasp"/>
</dbReference>
<dbReference type="InterPro" id="IPR013815">
    <property type="entry name" value="ATP_grasp_subdomain_1"/>
</dbReference>
<dbReference type="InterPro" id="IPR000291">
    <property type="entry name" value="D-Ala_lig_Van_CS"/>
</dbReference>
<dbReference type="InterPro" id="IPR005905">
    <property type="entry name" value="D_ala_D_ala"/>
</dbReference>
<dbReference type="InterPro" id="IPR011095">
    <property type="entry name" value="Dala_Dala_lig_C"/>
</dbReference>
<dbReference type="InterPro" id="IPR011127">
    <property type="entry name" value="Dala_Dala_lig_N"/>
</dbReference>
<dbReference type="InterPro" id="IPR016185">
    <property type="entry name" value="PreATP-grasp_dom_sf"/>
</dbReference>
<dbReference type="NCBIfam" id="TIGR01205">
    <property type="entry name" value="D_ala_D_alaTIGR"/>
    <property type="match status" value="1"/>
</dbReference>
<dbReference type="NCBIfam" id="NF002378">
    <property type="entry name" value="PRK01372.1"/>
    <property type="match status" value="1"/>
</dbReference>
<dbReference type="PANTHER" id="PTHR23132">
    <property type="entry name" value="D-ALANINE--D-ALANINE LIGASE"/>
    <property type="match status" value="1"/>
</dbReference>
<dbReference type="PANTHER" id="PTHR23132:SF23">
    <property type="entry name" value="D-ALANINE--D-ALANINE LIGASE B"/>
    <property type="match status" value="1"/>
</dbReference>
<dbReference type="Pfam" id="PF07478">
    <property type="entry name" value="Dala_Dala_lig_C"/>
    <property type="match status" value="1"/>
</dbReference>
<dbReference type="Pfam" id="PF01820">
    <property type="entry name" value="Dala_Dala_lig_N"/>
    <property type="match status" value="2"/>
</dbReference>
<dbReference type="PIRSF" id="PIRSF039102">
    <property type="entry name" value="Ddl/VanB"/>
    <property type="match status" value="1"/>
</dbReference>
<dbReference type="SMART" id="SM01209">
    <property type="entry name" value="GARS_A"/>
    <property type="match status" value="1"/>
</dbReference>
<dbReference type="SUPFAM" id="SSF56059">
    <property type="entry name" value="Glutathione synthetase ATP-binding domain-like"/>
    <property type="match status" value="1"/>
</dbReference>
<dbReference type="SUPFAM" id="SSF52440">
    <property type="entry name" value="PreATP-grasp domain"/>
    <property type="match status" value="1"/>
</dbReference>
<dbReference type="PROSITE" id="PS50975">
    <property type="entry name" value="ATP_GRASP"/>
    <property type="match status" value="1"/>
</dbReference>
<dbReference type="PROSITE" id="PS00843">
    <property type="entry name" value="DALA_DALA_LIGASE_1"/>
    <property type="match status" value="1"/>
</dbReference>
<dbReference type="PROSITE" id="PS00844">
    <property type="entry name" value="DALA_DALA_LIGASE_2"/>
    <property type="match status" value="1"/>
</dbReference>